<name>ATPD_RICCN</name>
<comment type="function">
    <text evidence="1">F(1)F(0) ATP synthase produces ATP from ADP in the presence of a proton or sodium gradient. F-type ATPases consist of two structural domains, F(1) containing the extramembraneous catalytic core and F(0) containing the membrane proton channel, linked together by a central stalk and a peripheral stalk. During catalysis, ATP synthesis in the catalytic domain of F(1) is coupled via a rotary mechanism of the central stalk subunits to proton translocation.</text>
</comment>
<comment type="function">
    <text evidence="1">This protein is part of the stalk that links CF(0) to CF(1). It either transmits conformational changes from CF(0) to CF(1) or is implicated in proton conduction.</text>
</comment>
<comment type="subunit">
    <text evidence="1">F-type ATPases have 2 components, F(1) - the catalytic core - and F(0) - the membrane proton channel. F(1) has five subunits: alpha(3), beta(3), gamma(1), delta(1), epsilon(1). F(0) has three main subunits: a(1), b(2) and c(10-14). The alpha and beta chains form an alternating ring which encloses part of the gamma chain. F(1) is attached to F(0) by a central stalk formed by the gamma and epsilon chains, while a peripheral stalk is formed by the delta and b chains.</text>
</comment>
<comment type="subcellular location">
    <subcellularLocation>
        <location evidence="1">Cell inner membrane</location>
        <topology evidence="1">Peripheral membrane protein</topology>
    </subcellularLocation>
</comment>
<comment type="similarity">
    <text evidence="1">Belongs to the ATPase delta chain family.</text>
</comment>
<keyword id="KW-0066">ATP synthesis</keyword>
<keyword id="KW-0997">Cell inner membrane</keyword>
<keyword id="KW-1003">Cell membrane</keyword>
<keyword id="KW-0139">CF(1)</keyword>
<keyword id="KW-0375">Hydrogen ion transport</keyword>
<keyword id="KW-0406">Ion transport</keyword>
<keyword id="KW-0472">Membrane</keyword>
<keyword id="KW-0813">Transport</keyword>
<dbReference type="EMBL" id="AE006914">
    <property type="protein sequence ID" value="AAL03776.1"/>
    <property type="molecule type" value="Genomic_DNA"/>
</dbReference>
<dbReference type="PIR" id="F97854">
    <property type="entry name" value="F97854"/>
</dbReference>
<dbReference type="RefSeq" id="WP_010977803.1">
    <property type="nucleotide sequence ID" value="NC_003103.1"/>
</dbReference>
<dbReference type="SMR" id="Q92G85"/>
<dbReference type="GeneID" id="928393"/>
<dbReference type="KEGG" id="rco:RC1238"/>
<dbReference type="PATRIC" id="fig|272944.4.peg.1419"/>
<dbReference type="HOGENOM" id="CLU_085114_1_1_5"/>
<dbReference type="Proteomes" id="UP000000816">
    <property type="component" value="Chromosome"/>
</dbReference>
<dbReference type="GO" id="GO:0005886">
    <property type="term" value="C:plasma membrane"/>
    <property type="evidence" value="ECO:0007669"/>
    <property type="project" value="UniProtKB-SubCell"/>
</dbReference>
<dbReference type="GO" id="GO:0045259">
    <property type="term" value="C:proton-transporting ATP synthase complex"/>
    <property type="evidence" value="ECO:0007669"/>
    <property type="project" value="UniProtKB-KW"/>
</dbReference>
<dbReference type="GO" id="GO:0046933">
    <property type="term" value="F:proton-transporting ATP synthase activity, rotational mechanism"/>
    <property type="evidence" value="ECO:0007669"/>
    <property type="project" value="UniProtKB-UniRule"/>
</dbReference>
<dbReference type="Gene3D" id="1.10.520.20">
    <property type="entry name" value="N-terminal domain of the delta subunit of the F1F0-ATP synthase"/>
    <property type="match status" value="1"/>
</dbReference>
<dbReference type="HAMAP" id="MF_01416">
    <property type="entry name" value="ATP_synth_delta_bact"/>
    <property type="match status" value="1"/>
</dbReference>
<dbReference type="InterPro" id="IPR026015">
    <property type="entry name" value="ATP_synth_OSCP/delta_N_sf"/>
</dbReference>
<dbReference type="InterPro" id="IPR000711">
    <property type="entry name" value="ATPase_OSCP/dsu"/>
</dbReference>
<dbReference type="NCBIfam" id="TIGR01145">
    <property type="entry name" value="ATP_synt_delta"/>
    <property type="match status" value="1"/>
</dbReference>
<dbReference type="PANTHER" id="PTHR11910">
    <property type="entry name" value="ATP SYNTHASE DELTA CHAIN"/>
    <property type="match status" value="1"/>
</dbReference>
<dbReference type="Pfam" id="PF00213">
    <property type="entry name" value="OSCP"/>
    <property type="match status" value="1"/>
</dbReference>
<dbReference type="PRINTS" id="PR00125">
    <property type="entry name" value="ATPASEDELTA"/>
</dbReference>
<dbReference type="SUPFAM" id="SSF47928">
    <property type="entry name" value="N-terminal domain of the delta subunit of the F1F0-ATP synthase"/>
    <property type="match status" value="1"/>
</dbReference>
<protein>
    <recommendedName>
        <fullName evidence="1">ATP synthase subunit delta</fullName>
    </recommendedName>
    <alternativeName>
        <fullName evidence="1">ATP synthase F(1) sector subunit delta</fullName>
    </alternativeName>
    <alternativeName>
        <fullName evidence="1">F-type ATPase subunit delta</fullName>
        <shortName evidence="1">F-ATPase subunit delta</shortName>
    </alternativeName>
</protein>
<proteinExistence type="inferred from homology"/>
<accession>Q92G85</accession>
<reference key="1">
    <citation type="journal article" date="2001" name="Science">
        <title>Mechanisms of evolution in Rickettsia conorii and R. prowazekii.</title>
        <authorList>
            <person name="Ogata H."/>
            <person name="Audic S."/>
            <person name="Renesto-Audiffren P."/>
            <person name="Fournier P.-E."/>
            <person name="Barbe V."/>
            <person name="Samson D."/>
            <person name="Roux V."/>
            <person name="Cossart P."/>
            <person name="Weissenbach J."/>
            <person name="Claverie J.-M."/>
            <person name="Raoult D."/>
        </authorList>
    </citation>
    <scope>NUCLEOTIDE SEQUENCE [LARGE SCALE GENOMIC DNA]</scope>
    <source>
        <strain>ATCC VR-613 / Malish 7</strain>
    </source>
</reference>
<organism>
    <name type="scientific">Rickettsia conorii (strain ATCC VR-613 / Malish 7)</name>
    <dbReference type="NCBI Taxonomy" id="272944"/>
    <lineage>
        <taxon>Bacteria</taxon>
        <taxon>Pseudomonadati</taxon>
        <taxon>Pseudomonadota</taxon>
        <taxon>Alphaproteobacteria</taxon>
        <taxon>Rickettsiales</taxon>
        <taxon>Rickettsiaceae</taxon>
        <taxon>Rickettsieae</taxon>
        <taxon>Rickettsia</taxon>
        <taxon>spotted fever group</taxon>
    </lineage>
</organism>
<sequence length="184" mass="20956">MNKGNLIKNYAVALLNNAMVDNIQDKIFEEITSINRIITDNFDIREFLFSPIVNKNDKINAVNSLAKNIKISTIVQNFLLLLVKNSRTAILSNIVDAYNTLLYESKNIKIVQVISANKLQPKEQEWIKSRIEKELNQTTEILFDIDNTIIGGIIIKYDSMLQDYSIKGSLEKIKKALKIVNIAV</sequence>
<gene>
    <name evidence="1" type="primary">atpH</name>
    <name type="ordered locus">RC1238</name>
</gene>
<feature type="chain" id="PRO_0000193478" description="ATP synthase subunit delta">
    <location>
        <begin position="1"/>
        <end position="184"/>
    </location>
</feature>
<evidence type="ECO:0000255" key="1">
    <source>
        <dbReference type="HAMAP-Rule" id="MF_01416"/>
    </source>
</evidence>